<protein>
    <recommendedName>
        <fullName evidence="1">UPF0398 protein LSL_0930</fullName>
    </recommendedName>
</protein>
<gene>
    <name type="ordered locus">LSL_0930</name>
</gene>
<evidence type="ECO:0000255" key="1">
    <source>
        <dbReference type="HAMAP-Rule" id="MF_01575"/>
    </source>
</evidence>
<name>Y930_LIGS1</name>
<comment type="similarity">
    <text evidence="1">Belongs to the UPF0398 family.</text>
</comment>
<sequence length="183" mass="21785">MNLWVTGYRSYELGVFNSKDKKVEVIKYALQKKILEKLDEGLEWVITGAQMGIEQWTCEVVAEMKKEYPELKLAIMMPYSEFAGNWNEANQESFSIRCSLADFVGEVSKEKYKSPMQLKNYQNFMLDHTDQAMLIYDPEHEGKTKYDYEMIKKYSEQEDYSYDLVDMYQLQEFAEMYQEKDSF</sequence>
<accession>Q1WTM2</accession>
<keyword id="KW-1185">Reference proteome</keyword>
<feature type="chain" id="PRO_0000267162" description="UPF0398 protein LSL_0930">
    <location>
        <begin position="1"/>
        <end position="183"/>
    </location>
</feature>
<organism>
    <name type="scientific">Ligilactobacillus salivarius (strain UCC118)</name>
    <name type="common">Lactobacillus salivarius</name>
    <dbReference type="NCBI Taxonomy" id="362948"/>
    <lineage>
        <taxon>Bacteria</taxon>
        <taxon>Bacillati</taxon>
        <taxon>Bacillota</taxon>
        <taxon>Bacilli</taxon>
        <taxon>Lactobacillales</taxon>
        <taxon>Lactobacillaceae</taxon>
        <taxon>Ligilactobacillus</taxon>
    </lineage>
</organism>
<proteinExistence type="inferred from homology"/>
<reference key="1">
    <citation type="journal article" date="2006" name="Proc. Natl. Acad. Sci. U.S.A.">
        <title>Multireplicon genome architecture of Lactobacillus salivarius.</title>
        <authorList>
            <person name="Claesson M.J."/>
            <person name="Li Y."/>
            <person name="Leahy S."/>
            <person name="Canchaya C."/>
            <person name="van Pijkeren J.P."/>
            <person name="Cerdeno-Tarraga A.M."/>
            <person name="Parkhill J."/>
            <person name="Flynn S."/>
            <person name="O'Sullivan G.C."/>
            <person name="Collins J.K."/>
            <person name="Higgins D."/>
            <person name="Shanahan F."/>
            <person name="Fitzgerald G.F."/>
            <person name="van Sinderen D."/>
            <person name="O'Toole P.W."/>
        </authorList>
    </citation>
    <scope>NUCLEOTIDE SEQUENCE [LARGE SCALE GENOMIC DNA]</scope>
    <source>
        <strain>UCC118</strain>
    </source>
</reference>
<dbReference type="EMBL" id="CP000233">
    <property type="protein sequence ID" value="ABD99740.1"/>
    <property type="molecule type" value="Genomic_DNA"/>
</dbReference>
<dbReference type="RefSeq" id="WP_011476053.1">
    <property type="nucleotide sequence ID" value="NC_007929.1"/>
</dbReference>
<dbReference type="RefSeq" id="YP_535823.1">
    <property type="nucleotide sequence ID" value="NC_007929.1"/>
</dbReference>
<dbReference type="SMR" id="Q1WTM2"/>
<dbReference type="STRING" id="362948.LSL_0930"/>
<dbReference type="KEGG" id="lsl:LSL_0930"/>
<dbReference type="PATRIC" id="fig|362948.14.peg.1005"/>
<dbReference type="HOGENOM" id="CLU_105319_0_0_9"/>
<dbReference type="OrthoDB" id="2301957at2"/>
<dbReference type="Proteomes" id="UP000006559">
    <property type="component" value="Chromosome"/>
</dbReference>
<dbReference type="Gene3D" id="3.40.50.450">
    <property type="match status" value="1"/>
</dbReference>
<dbReference type="HAMAP" id="MF_01575">
    <property type="entry name" value="UPF0398"/>
    <property type="match status" value="1"/>
</dbReference>
<dbReference type="InterPro" id="IPR010697">
    <property type="entry name" value="YspA"/>
</dbReference>
<dbReference type="NCBIfam" id="NF010181">
    <property type="entry name" value="PRK13660.1"/>
    <property type="match status" value="1"/>
</dbReference>
<dbReference type="PANTHER" id="PTHR38440:SF1">
    <property type="entry name" value="UPF0398 PROTEIN SPR0331"/>
    <property type="match status" value="1"/>
</dbReference>
<dbReference type="PANTHER" id="PTHR38440">
    <property type="entry name" value="UPF0398 PROTEIN YPSA"/>
    <property type="match status" value="1"/>
</dbReference>
<dbReference type="Pfam" id="PF06908">
    <property type="entry name" value="YpsA"/>
    <property type="match status" value="1"/>
</dbReference>
<dbReference type="PIRSF" id="PIRSF021290">
    <property type="entry name" value="DUF1273"/>
    <property type="match status" value="1"/>
</dbReference>
<dbReference type="SUPFAM" id="SSF102405">
    <property type="entry name" value="MCP/YpsA-like"/>
    <property type="match status" value="1"/>
</dbReference>